<name>CH60_NEIMF</name>
<keyword id="KW-0067">ATP-binding</keyword>
<keyword id="KW-0143">Chaperone</keyword>
<keyword id="KW-0963">Cytoplasm</keyword>
<keyword id="KW-0413">Isomerase</keyword>
<keyword id="KW-0547">Nucleotide-binding</keyword>
<proteinExistence type="inferred from homology"/>
<protein>
    <recommendedName>
        <fullName evidence="1">Chaperonin GroEL</fullName>
        <ecNumber evidence="1">5.6.1.7</ecNumber>
    </recommendedName>
    <alternativeName>
        <fullName evidence="1">60 kDa chaperonin</fullName>
    </alternativeName>
    <alternativeName>
        <fullName evidence="1">Chaperonin-60</fullName>
        <shortName evidence="1">Cpn60</shortName>
    </alternativeName>
</protein>
<comment type="function">
    <text evidence="1">Together with its co-chaperonin GroES, plays an essential role in assisting protein folding. The GroEL-GroES system forms a nano-cage that allows encapsulation of the non-native substrate proteins and provides a physical environment optimized to promote and accelerate protein folding.</text>
</comment>
<comment type="catalytic activity">
    <reaction evidence="1">
        <text>ATP + H2O + a folded polypeptide = ADP + phosphate + an unfolded polypeptide.</text>
        <dbReference type="EC" id="5.6.1.7"/>
    </reaction>
</comment>
<comment type="subunit">
    <text evidence="1">Forms a cylinder of 14 subunits composed of two heptameric rings stacked back-to-back. Interacts with the co-chaperonin GroES.</text>
</comment>
<comment type="subcellular location">
    <subcellularLocation>
        <location evidence="1">Cytoplasm</location>
    </subcellularLocation>
</comment>
<comment type="similarity">
    <text evidence="1">Belongs to the chaperonin (HSP60) family.</text>
</comment>
<organism>
    <name type="scientific">Neisseria meningitidis serogroup C / serotype 2a (strain ATCC 700532 / DSM 15464 / FAM18)</name>
    <dbReference type="NCBI Taxonomy" id="272831"/>
    <lineage>
        <taxon>Bacteria</taxon>
        <taxon>Pseudomonadati</taxon>
        <taxon>Pseudomonadota</taxon>
        <taxon>Betaproteobacteria</taxon>
        <taxon>Neisseriales</taxon>
        <taxon>Neisseriaceae</taxon>
        <taxon>Neisseria</taxon>
    </lineage>
</organism>
<feature type="chain" id="PRO_1000025809" description="Chaperonin GroEL">
    <location>
        <begin position="1"/>
        <end position="544"/>
    </location>
</feature>
<feature type="binding site" evidence="1">
    <location>
        <begin position="30"/>
        <end position="33"/>
    </location>
    <ligand>
        <name>ATP</name>
        <dbReference type="ChEBI" id="CHEBI:30616"/>
    </ligand>
</feature>
<feature type="binding site" evidence="1">
    <location>
        <position position="51"/>
    </location>
    <ligand>
        <name>ATP</name>
        <dbReference type="ChEBI" id="CHEBI:30616"/>
    </ligand>
</feature>
<feature type="binding site" evidence="1">
    <location>
        <begin position="87"/>
        <end position="91"/>
    </location>
    <ligand>
        <name>ATP</name>
        <dbReference type="ChEBI" id="CHEBI:30616"/>
    </ligand>
</feature>
<feature type="binding site" evidence="1">
    <location>
        <position position="415"/>
    </location>
    <ligand>
        <name>ATP</name>
        <dbReference type="ChEBI" id="CHEBI:30616"/>
    </ligand>
</feature>
<feature type="binding site" evidence="1">
    <location>
        <position position="495"/>
    </location>
    <ligand>
        <name>ATP</name>
        <dbReference type="ChEBI" id="CHEBI:30616"/>
    </ligand>
</feature>
<reference key="1">
    <citation type="journal article" date="2007" name="PLoS Genet.">
        <title>Meningococcal genetic variation mechanisms viewed through comparative analysis of serogroup C strain FAM18.</title>
        <authorList>
            <person name="Bentley S.D."/>
            <person name="Vernikos G.S."/>
            <person name="Snyder L.A.S."/>
            <person name="Churcher C."/>
            <person name="Arrowsmith C."/>
            <person name="Chillingworth T."/>
            <person name="Cronin A."/>
            <person name="Davis P.H."/>
            <person name="Holroyd N.E."/>
            <person name="Jagels K."/>
            <person name="Maddison M."/>
            <person name="Moule S."/>
            <person name="Rabbinowitsch E."/>
            <person name="Sharp S."/>
            <person name="Unwin L."/>
            <person name="Whitehead S."/>
            <person name="Quail M.A."/>
            <person name="Achtman M."/>
            <person name="Barrell B.G."/>
            <person name="Saunders N.J."/>
            <person name="Parkhill J."/>
        </authorList>
    </citation>
    <scope>NUCLEOTIDE SEQUENCE [LARGE SCALE GENOMIC DNA]</scope>
    <source>
        <strain>ATCC 700532 / DSM 15464 / FAM18</strain>
    </source>
</reference>
<dbReference type="EC" id="5.6.1.7" evidence="1"/>
<dbReference type="EMBL" id="AM421808">
    <property type="protein sequence ID" value="CAM11108.1"/>
    <property type="molecule type" value="Genomic_DNA"/>
</dbReference>
<dbReference type="RefSeq" id="WP_002221652.1">
    <property type="nucleotide sequence ID" value="NC_008767.1"/>
</dbReference>
<dbReference type="SMR" id="A1KW52"/>
<dbReference type="KEGG" id="nmc:NMC1948"/>
<dbReference type="HOGENOM" id="CLU_016503_3_0_4"/>
<dbReference type="Proteomes" id="UP000002286">
    <property type="component" value="Chromosome"/>
</dbReference>
<dbReference type="GO" id="GO:0005737">
    <property type="term" value="C:cytoplasm"/>
    <property type="evidence" value="ECO:0007669"/>
    <property type="project" value="UniProtKB-SubCell"/>
</dbReference>
<dbReference type="GO" id="GO:0005524">
    <property type="term" value="F:ATP binding"/>
    <property type="evidence" value="ECO:0007669"/>
    <property type="project" value="UniProtKB-UniRule"/>
</dbReference>
<dbReference type="GO" id="GO:0140662">
    <property type="term" value="F:ATP-dependent protein folding chaperone"/>
    <property type="evidence" value="ECO:0007669"/>
    <property type="project" value="InterPro"/>
</dbReference>
<dbReference type="GO" id="GO:0016853">
    <property type="term" value="F:isomerase activity"/>
    <property type="evidence" value="ECO:0007669"/>
    <property type="project" value="UniProtKB-KW"/>
</dbReference>
<dbReference type="GO" id="GO:0051082">
    <property type="term" value="F:unfolded protein binding"/>
    <property type="evidence" value="ECO:0007669"/>
    <property type="project" value="UniProtKB-UniRule"/>
</dbReference>
<dbReference type="GO" id="GO:0042026">
    <property type="term" value="P:protein refolding"/>
    <property type="evidence" value="ECO:0007669"/>
    <property type="project" value="UniProtKB-UniRule"/>
</dbReference>
<dbReference type="CDD" id="cd03344">
    <property type="entry name" value="GroEL"/>
    <property type="match status" value="1"/>
</dbReference>
<dbReference type="FunFam" id="1.10.560.10:FF:000001">
    <property type="entry name" value="60 kDa chaperonin"/>
    <property type="match status" value="1"/>
</dbReference>
<dbReference type="FunFam" id="3.50.7.10:FF:000001">
    <property type="entry name" value="60 kDa chaperonin"/>
    <property type="match status" value="1"/>
</dbReference>
<dbReference type="Gene3D" id="3.50.7.10">
    <property type="entry name" value="GroEL"/>
    <property type="match status" value="1"/>
</dbReference>
<dbReference type="Gene3D" id="1.10.560.10">
    <property type="entry name" value="GroEL-like equatorial domain"/>
    <property type="match status" value="1"/>
</dbReference>
<dbReference type="Gene3D" id="3.30.260.10">
    <property type="entry name" value="TCP-1-like chaperonin intermediate domain"/>
    <property type="match status" value="1"/>
</dbReference>
<dbReference type="HAMAP" id="MF_00600">
    <property type="entry name" value="CH60"/>
    <property type="match status" value="1"/>
</dbReference>
<dbReference type="InterPro" id="IPR018370">
    <property type="entry name" value="Chaperonin_Cpn60_CS"/>
</dbReference>
<dbReference type="InterPro" id="IPR001844">
    <property type="entry name" value="Cpn60/GroEL"/>
</dbReference>
<dbReference type="InterPro" id="IPR002423">
    <property type="entry name" value="Cpn60/GroEL/TCP-1"/>
</dbReference>
<dbReference type="InterPro" id="IPR027409">
    <property type="entry name" value="GroEL-like_apical_dom_sf"/>
</dbReference>
<dbReference type="InterPro" id="IPR027413">
    <property type="entry name" value="GROEL-like_equatorial_sf"/>
</dbReference>
<dbReference type="InterPro" id="IPR027410">
    <property type="entry name" value="TCP-1-like_intermed_sf"/>
</dbReference>
<dbReference type="NCBIfam" id="TIGR02348">
    <property type="entry name" value="GroEL"/>
    <property type="match status" value="1"/>
</dbReference>
<dbReference type="NCBIfam" id="NF000592">
    <property type="entry name" value="PRK00013.1"/>
    <property type="match status" value="1"/>
</dbReference>
<dbReference type="NCBIfam" id="NF009487">
    <property type="entry name" value="PRK12849.1"/>
    <property type="match status" value="1"/>
</dbReference>
<dbReference type="NCBIfam" id="NF009488">
    <property type="entry name" value="PRK12850.1"/>
    <property type="match status" value="1"/>
</dbReference>
<dbReference type="NCBIfam" id="NF009489">
    <property type="entry name" value="PRK12851.1"/>
    <property type="match status" value="1"/>
</dbReference>
<dbReference type="PANTHER" id="PTHR45633">
    <property type="entry name" value="60 KDA HEAT SHOCK PROTEIN, MITOCHONDRIAL"/>
    <property type="match status" value="1"/>
</dbReference>
<dbReference type="Pfam" id="PF00118">
    <property type="entry name" value="Cpn60_TCP1"/>
    <property type="match status" value="1"/>
</dbReference>
<dbReference type="PRINTS" id="PR00298">
    <property type="entry name" value="CHAPERONIN60"/>
</dbReference>
<dbReference type="SUPFAM" id="SSF52029">
    <property type="entry name" value="GroEL apical domain-like"/>
    <property type="match status" value="1"/>
</dbReference>
<dbReference type="SUPFAM" id="SSF48592">
    <property type="entry name" value="GroEL equatorial domain-like"/>
    <property type="match status" value="1"/>
</dbReference>
<dbReference type="SUPFAM" id="SSF54849">
    <property type="entry name" value="GroEL-intermediate domain like"/>
    <property type="match status" value="1"/>
</dbReference>
<dbReference type="PROSITE" id="PS00296">
    <property type="entry name" value="CHAPERONINS_CPN60"/>
    <property type="match status" value="1"/>
</dbReference>
<gene>
    <name evidence="1" type="primary">groEL</name>
    <name evidence="1" type="synonym">groL</name>
    <name type="ordered locus">NMC1948</name>
</gene>
<evidence type="ECO:0000255" key="1">
    <source>
        <dbReference type="HAMAP-Rule" id="MF_00600"/>
    </source>
</evidence>
<sequence>MAAKDVQFGNEVRQKMVNGVNILANAVRVTLGPKGRNVVVDRAFGGPHITKDGVTVAKEIELKDKFENMGAQMVKEVASKTNDVAGDGTTTATVLAQSIVAEGMKYVTAGMNPTDLKRGIDKAVAALVEELKNIAKPCDTSKEIAQVGSISANSDEQVGAIIAEAMEKVGKEGVITVEDGKSLENELDVVEGMQFDRGYLSPYFINDAEKQIAGLDNPFVLLFDKKISNIRDLLPVLEQVAKASRPLLIIAEDVEGEALATLVVNNIRGILKTVAVKAPGFGDRRKAMLQDIAILTGGTVISEEVGLSLEKATLDDLGQAKRIEIGKENTTIIDGFGDAAQIEARVAEIRQQIETATSDYDKEKLQERVAKLAGGVAVIKVGAATEVEMKEKKDRVEDALHATRAAVEEGVVAGGGVALLRARAALENLHTGNADQDAGVQIVLRAVESPLRQIVANAGGEPSVVVNKVLEGKGNYGYNAGSGEYGDMIEMGVLDPAKVTRSALQHAASIAGLMLTTDCMIAEIPEDKPAMPDMGGMGGMGGMM</sequence>
<accession>A1KW52</accession>